<keyword id="KW-0963">Cytoplasm</keyword>
<keyword id="KW-0704">Schiff base</keyword>
<keyword id="KW-0784">Thiamine biosynthesis</keyword>
<keyword id="KW-0808">Transferase</keyword>
<proteinExistence type="inferred from homology"/>
<protein>
    <recommendedName>
        <fullName evidence="1">Thiazole synthase</fullName>
        <ecNumber evidence="1">2.8.1.10</ecNumber>
    </recommendedName>
</protein>
<sequence>MLRIADKTFDSHLFTGTGKFASSQLMVEAIRASGSQLVTLAMKRVDLRQHNDAILAPLIEAGVTLLPNTSGAKTAEEAIFAAQLAREALGTNWLKLEIHPDARWLLPDPIETLKAAEALVKQGFVVLPYCGADPVLCKRLEEVGCAAVMPLGAPIGSNQGLETKTMLEIIIQQATVPVVVDAGIGVPSHAAQALEMGADAVLVNTAIAVADDPVMMATAFRLAVEAGLLARQAVPGNRSTYASATSPLTGFLEALA</sequence>
<organism>
    <name type="scientific">Salmonella enteritidis PT4 (strain P125109)</name>
    <dbReference type="NCBI Taxonomy" id="550537"/>
    <lineage>
        <taxon>Bacteria</taxon>
        <taxon>Pseudomonadati</taxon>
        <taxon>Pseudomonadota</taxon>
        <taxon>Gammaproteobacteria</taxon>
        <taxon>Enterobacterales</taxon>
        <taxon>Enterobacteriaceae</taxon>
        <taxon>Salmonella</taxon>
    </lineage>
</organism>
<evidence type="ECO:0000255" key="1">
    <source>
        <dbReference type="HAMAP-Rule" id="MF_00443"/>
    </source>
</evidence>
<comment type="function">
    <text evidence="1">Catalyzes the rearrangement of 1-deoxy-D-xylulose 5-phosphate (DXP) to produce the thiazole phosphate moiety of thiamine. Sulfur is provided by the thiocarboxylate moiety of the carrier protein ThiS. In vitro, sulfur can be provided by H(2)S.</text>
</comment>
<comment type="catalytic activity">
    <reaction evidence="1">
        <text>[ThiS sulfur-carrier protein]-C-terminal-Gly-aminoethanethioate + 2-iminoacetate + 1-deoxy-D-xylulose 5-phosphate = [ThiS sulfur-carrier protein]-C-terminal Gly-Gly + 2-[(2R,5Z)-2-carboxy-4-methylthiazol-5(2H)-ylidene]ethyl phosphate + 2 H2O + H(+)</text>
        <dbReference type="Rhea" id="RHEA:26297"/>
        <dbReference type="Rhea" id="RHEA-COMP:12909"/>
        <dbReference type="Rhea" id="RHEA-COMP:19908"/>
        <dbReference type="ChEBI" id="CHEBI:15377"/>
        <dbReference type="ChEBI" id="CHEBI:15378"/>
        <dbReference type="ChEBI" id="CHEBI:57792"/>
        <dbReference type="ChEBI" id="CHEBI:62899"/>
        <dbReference type="ChEBI" id="CHEBI:77846"/>
        <dbReference type="ChEBI" id="CHEBI:90778"/>
        <dbReference type="ChEBI" id="CHEBI:232372"/>
        <dbReference type="EC" id="2.8.1.10"/>
    </reaction>
</comment>
<comment type="pathway">
    <text evidence="1">Cofactor biosynthesis; thiamine diphosphate biosynthesis.</text>
</comment>
<comment type="subunit">
    <text evidence="1">Homotetramer. Forms heterodimers with either ThiH or ThiS.</text>
</comment>
<comment type="subcellular location">
    <subcellularLocation>
        <location evidence="1">Cytoplasm</location>
    </subcellularLocation>
</comment>
<comment type="similarity">
    <text evidence="1">Belongs to the ThiG family.</text>
</comment>
<feature type="chain" id="PRO_1000196893" description="Thiazole synthase">
    <location>
        <begin position="1"/>
        <end position="256"/>
    </location>
</feature>
<feature type="active site" description="Schiff-base intermediate with DXP" evidence="1">
    <location>
        <position position="95"/>
    </location>
</feature>
<feature type="binding site" evidence="1">
    <location>
        <position position="156"/>
    </location>
    <ligand>
        <name>1-deoxy-D-xylulose 5-phosphate</name>
        <dbReference type="ChEBI" id="CHEBI:57792"/>
    </ligand>
</feature>
<feature type="binding site" evidence="1">
    <location>
        <begin position="182"/>
        <end position="183"/>
    </location>
    <ligand>
        <name>1-deoxy-D-xylulose 5-phosphate</name>
        <dbReference type="ChEBI" id="CHEBI:57792"/>
    </ligand>
</feature>
<feature type="binding site" evidence="1">
    <location>
        <begin position="204"/>
        <end position="205"/>
    </location>
    <ligand>
        <name>1-deoxy-D-xylulose 5-phosphate</name>
        <dbReference type="ChEBI" id="CHEBI:57792"/>
    </ligand>
</feature>
<name>THIG_SALEP</name>
<accession>B5QYE5</accession>
<reference key="1">
    <citation type="journal article" date="2008" name="Genome Res.">
        <title>Comparative genome analysis of Salmonella enteritidis PT4 and Salmonella gallinarum 287/91 provides insights into evolutionary and host adaptation pathways.</title>
        <authorList>
            <person name="Thomson N.R."/>
            <person name="Clayton D.J."/>
            <person name="Windhorst D."/>
            <person name="Vernikos G."/>
            <person name="Davidson S."/>
            <person name="Churcher C."/>
            <person name="Quail M.A."/>
            <person name="Stevens M."/>
            <person name="Jones M.A."/>
            <person name="Watson M."/>
            <person name="Barron A."/>
            <person name="Layton A."/>
            <person name="Pickard D."/>
            <person name="Kingsley R.A."/>
            <person name="Bignell A."/>
            <person name="Clark L."/>
            <person name="Harris B."/>
            <person name="Ormond D."/>
            <person name="Abdellah Z."/>
            <person name="Brooks K."/>
            <person name="Cherevach I."/>
            <person name="Chillingworth T."/>
            <person name="Woodward J."/>
            <person name="Norberczak H."/>
            <person name="Lord A."/>
            <person name="Arrowsmith C."/>
            <person name="Jagels K."/>
            <person name="Moule S."/>
            <person name="Mungall K."/>
            <person name="Saunders M."/>
            <person name="Whitehead S."/>
            <person name="Chabalgoity J.A."/>
            <person name="Maskell D."/>
            <person name="Humphreys T."/>
            <person name="Roberts M."/>
            <person name="Barrow P.A."/>
            <person name="Dougan G."/>
            <person name="Parkhill J."/>
        </authorList>
    </citation>
    <scope>NUCLEOTIDE SEQUENCE [LARGE SCALE GENOMIC DNA]</scope>
    <source>
        <strain>P125109</strain>
    </source>
</reference>
<dbReference type="EC" id="2.8.1.10" evidence="1"/>
<dbReference type="EMBL" id="AM933172">
    <property type="protein sequence ID" value="CAR35515.1"/>
    <property type="molecule type" value="Genomic_DNA"/>
</dbReference>
<dbReference type="RefSeq" id="WP_000944083.1">
    <property type="nucleotide sequence ID" value="NC_011294.1"/>
</dbReference>
<dbReference type="SMR" id="B5QYE5"/>
<dbReference type="KEGG" id="set:SEN3946"/>
<dbReference type="HOGENOM" id="CLU_062233_1_0_6"/>
<dbReference type="UniPathway" id="UPA00060"/>
<dbReference type="Proteomes" id="UP000000613">
    <property type="component" value="Chromosome"/>
</dbReference>
<dbReference type="GO" id="GO:0005737">
    <property type="term" value="C:cytoplasm"/>
    <property type="evidence" value="ECO:0007669"/>
    <property type="project" value="UniProtKB-SubCell"/>
</dbReference>
<dbReference type="GO" id="GO:1990107">
    <property type="term" value="F:thiazole synthase activity"/>
    <property type="evidence" value="ECO:0007669"/>
    <property type="project" value="UniProtKB-EC"/>
</dbReference>
<dbReference type="GO" id="GO:0009229">
    <property type="term" value="P:thiamine diphosphate biosynthetic process"/>
    <property type="evidence" value="ECO:0007669"/>
    <property type="project" value="UniProtKB-UniRule"/>
</dbReference>
<dbReference type="CDD" id="cd04728">
    <property type="entry name" value="ThiG"/>
    <property type="match status" value="1"/>
</dbReference>
<dbReference type="FunFam" id="3.20.20.70:FF:000049">
    <property type="entry name" value="Thiazole synthase"/>
    <property type="match status" value="1"/>
</dbReference>
<dbReference type="Gene3D" id="3.20.20.70">
    <property type="entry name" value="Aldolase class I"/>
    <property type="match status" value="1"/>
</dbReference>
<dbReference type="HAMAP" id="MF_00443">
    <property type="entry name" value="ThiG"/>
    <property type="match status" value="1"/>
</dbReference>
<dbReference type="InterPro" id="IPR013785">
    <property type="entry name" value="Aldolase_TIM"/>
</dbReference>
<dbReference type="InterPro" id="IPR033983">
    <property type="entry name" value="Thiazole_synthase_ThiG"/>
</dbReference>
<dbReference type="InterPro" id="IPR008867">
    <property type="entry name" value="ThiG"/>
</dbReference>
<dbReference type="PANTHER" id="PTHR34266">
    <property type="entry name" value="THIAZOLE SYNTHASE"/>
    <property type="match status" value="1"/>
</dbReference>
<dbReference type="PANTHER" id="PTHR34266:SF2">
    <property type="entry name" value="THIAZOLE SYNTHASE"/>
    <property type="match status" value="1"/>
</dbReference>
<dbReference type="Pfam" id="PF05690">
    <property type="entry name" value="ThiG"/>
    <property type="match status" value="1"/>
</dbReference>
<dbReference type="SUPFAM" id="SSF110399">
    <property type="entry name" value="ThiG-like"/>
    <property type="match status" value="1"/>
</dbReference>
<gene>
    <name evidence="1" type="primary">thiG</name>
    <name type="ordered locus">SEN3946</name>
</gene>